<accession>Q14K49</accession>
<proteinExistence type="inferred from homology"/>
<name>GATA_FRAT1</name>
<sequence>MSYIKKLRARLDSGEISAVELTKEYLAKIKEQDKRINSVITLCEAEALKEAEDADAIISAGKQGLLTGIPILHKDLFCTKGIRTTAASKMLDNFVAPYDSTVTKNCKDQGMVTLGKLNMDEFAMGSTNEYSYYGAVSNPWDLERVPGGSSGGSAAAVAAGFAPISTGSDTGGSVRQPASFCGLTAMKPSYGSTSRFGMVAFASSFDQAGVLGHYAEDVAIMLDAIAGECEFDSTCVGVKQNHFTQDLEKDISGKVIGVDESLIKDLPAQIQEAVSKTLDNFKKLGAEIKSVKVPDLKEALSTYYIITPAEAAANLARYDGIRYGYRNPEARDLDELYRKSRTDGFGAEVKRRIMIGNYVLASSQYDSYYNKAQQLRKVMTDQINQIFTQVDAIFMPASPSEAFKKGDKLDPVSAYLSDIYTIPANISGLPAIAFPIGFANNLPVGGQLMAKAFNDNILTQMVVQYQKHYGIEEFILQQARI</sequence>
<keyword id="KW-0067">ATP-binding</keyword>
<keyword id="KW-0436">Ligase</keyword>
<keyword id="KW-0547">Nucleotide-binding</keyword>
<keyword id="KW-0648">Protein biosynthesis</keyword>
<dbReference type="EC" id="6.3.5.7" evidence="1"/>
<dbReference type="EMBL" id="AM286280">
    <property type="protein sequence ID" value="CAL08036.1"/>
    <property type="molecule type" value="Genomic_DNA"/>
</dbReference>
<dbReference type="RefSeq" id="WP_003022862.1">
    <property type="nucleotide sequence ID" value="NC_008245.1"/>
</dbReference>
<dbReference type="SMR" id="Q14K49"/>
<dbReference type="KEGG" id="ftf:FTF0020"/>
<dbReference type="HOGENOM" id="CLU_009600_0_3_6"/>
<dbReference type="GO" id="GO:0030956">
    <property type="term" value="C:glutamyl-tRNA(Gln) amidotransferase complex"/>
    <property type="evidence" value="ECO:0007669"/>
    <property type="project" value="InterPro"/>
</dbReference>
<dbReference type="GO" id="GO:0005524">
    <property type="term" value="F:ATP binding"/>
    <property type="evidence" value="ECO:0007669"/>
    <property type="project" value="UniProtKB-KW"/>
</dbReference>
<dbReference type="GO" id="GO:0050567">
    <property type="term" value="F:glutaminyl-tRNA synthase (glutamine-hydrolyzing) activity"/>
    <property type="evidence" value="ECO:0007669"/>
    <property type="project" value="UniProtKB-UniRule"/>
</dbReference>
<dbReference type="GO" id="GO:0006412">
    <property type="term" value="P:translation"/>
    <property type="evidence" value="ECO:0007669"/>
    <property type="project" value="UniProtKB-UniRule"/>
</dbReference>
<dbReference type="Gene3D" id="3.90.1300.10">
    <property type="entry name" value="Amidase signature (AS) domain"/>
    <property type="match status" value="1"/>
</dbReference>
<dbReference type="HAMAP" id="MF_00120">
    <property type="entry name" value="GatA"/>
    <property type="match status" value="1"/>
</dbReference>
<dbReference type="InterPro" id="IPR000120">
    <property type="entry name" value="Amidase"/>
</dbReference>
<dbReference type="InterPro" id="IPR020556">
    <property type="entry name" value="Amidase_CS"/>
</dbReference>
<dbReference type="InterPro" id="IPR023631">
    <property type="entry name" value="Amidase_dom"/>
</dbReference>
<dbReference type="InterPro" id="IPR036928">
    <property type="entry name" value="AS_sf"/>
</dbReference>
<dbReference type="InterPro" id="IPR004412">
    <property type="entry name" value="GatA"/>
</dbReference>
<dbReference type="NCBIfam" id="TIGR00132">
    <property type="entry name" value="gatA"/>
    <property type="match status" value="1"/>
</dbReference>
<dbReference type="PANTHER" id="PTHR11895:SF151">
    <property type="entry name" value="GLUTAMYL-TRNA(GLN) AMIDOTRANSFERASE SUBUNIT A"/>
    <property type="match status" value="1"/>
</dbReference>
<dbReference type="PANTHER" id="PTHR11895">
    <property type="entry name" value="TRANSAMIDASE"/>
    <property type="match status" value="1"/>
</dbReference>
<dbReference type="Pfam" id="PF01425">
    <property type="entry name" value="Amidase"/>
    <property type="match status" value="1"/>
</dbReference>
<dbReference type="SUPFAM" id="SSF75304">
    <property type="entry name" value="Amidase signature (AS) enzymes"/>
    <property type="match status" value="1"/>
</dbReference>
<dbReference type="PROSITE" id="PS00571">
    <property type="entry name" value="AMIDASES"/>
    <property type="match status" value="1"/>
</dbReference>
<reference key="1">
    <citation type="journal article" date="2007" name="PLoS ONE">
        <title>Genome sequencing shows that European isolates of Francisella tularensis subspecies tularensis are almost identical to US laboratory strain Schu S4.</title>
        <authorList>
            <person name="Chaudhuri R.R."/>
            <person name="Ren C.-P."/>
            <person name="Desmond L."/>
            <person name="Vincent G.A."/>
            <person name="Silman N.J."/>
            <person name="Brehm J.K."/>
            <person name="Elmore M.J."/>
            <person name="Hudson M.J."/>
            <person name="Forsman M."/>
            <person name="Isherwood K.E."/>
            <person name="Gurycova D."/>
            <person name="Minton N.P."/>
            <person name="Titball R.W."/>
            <person name="Pallen M.J."/>
            <person name="Vipond R."/>
        </authorList>
    </citation>
    <scope>NUCLEOTIDE SEQUENCE [LARGE SCALE GENOMIC DNA]</scope>
    <source>
        <strain>FSC 198</strain>
    </source>
</reference>
<protein>
    <recommendedName>
        <fullName evidence="1">Glutamyl-tRNA(Gln) amidotransferase subunit A</fullName>
        <shortName evidence="1">Glu-ADT subunit A</shortName>
        <ecNumber evidence="1">6.3.5.7</ecNumber>
    </recommendedName>
</protein>
<organism>
    <name type="scientific">Francisella tularensis subsp. tularensis (strain FSC 198)</name>
    <dbReference type="NCBI Taxonomy" id="393115"/>
    <lineage>
        <taxon>Bacteria</taxon>
        <taxon>Pseudomonadati</taxon>
        <taxon>Pseudomonadota</taxon>
        <taxon>Gammaproteobacteria</taxon>
        <taxon>Thiotrichales</taxon>
        <taxon>Francisellaceae</taxon>
        <taxon>Francisella</taxon>
    </lineage>
</organism>
<gene>
    <name evidence="1" type="primary">gatA</name>
    <name type="ordered locus">FTF0020</name>
</gene>
<comment type="function">
    <text evidence="1">Allows the formation of correctly charged Gln-tRNA(Gln) through the transamidation of misacylated Glu-tRNA(Gln) in organisms which lack glutaminyl-tRNA synthetase. The reaction takes place in the presence of glutamine and ATP through an activated gamma-phospho-Glu-tRNA(Gln).</text>
</comment>
<comment type="catalytic activity">
    <reaction evidence="1">
        <text>L-glutamyl-tRNA(Gln) + L-glutamine + ATP + H2O = L-glutaminyl-tRNA(Gln) + L-glutamate + ADP + phosphate + H(+)</text>
        <dbReference type="Rhea" id="RHEA:17521"/>
        <dbReference type="Rhea" id="RHEA-COMP:9681"/>
        <dbReference type="Rhea" id="RHEA-COMP:9684"/>
        <dbReference type="ChEBI" id="CHEBI:15377"/>
        <dbReference type="ChEBI" id="CHEBI:15378"/>
        <dbReference type="ChEBI" id="CHEBI:29985"/>
        <dbReference type="ChEBI" id="CHEBI:30616"/>
        <dbReference type="ChEBI" id="CHEBI:43474"/>
        <dbReference type="ChEBI" id="CHEBI:58359"/>
        <dbReference type="ChEBI" id="CHEBI:78520"/>
        <dbReference type="ChEBI" id="CHEBI:78521"/>
        <dbReference type="ChEBI" id="CHEBI:456216"/>
        <dbReference type="EC" id="6.3.5.7"/>
    </reaction>
</comment>
<comment type="subunit">
    <text evidence="1">Heterotrimer of A, B and C subunits.</text>
</comment>
<comment type="similarity">
    <text evidence="1">Belongs to the amidase family. GatA subfamily.</text>
</comment>
<feature type="chain" id="PRO_1000015830" description="Glutamyl-tRNA(Gln) amidotransferase subunit A">
    <location>
        <begin position="1"/>
        <end position="481"/>
    </location>
</feature>
<feature type="active site" description="Charge relay system" evidence="1">
    <location>
        <position position="74"/>
    </location>
</feature>
<feature type="active site" description="Charge relay system" evidence="1">
    <location>
        <position position="149"/>
    </location>
</feature>
<feature type="active site" description="Acyl-ester intermediate" evidence="1">
    <location>
        <position position="173"/>
    </location>
</feature>
<evidence type="ECO:0000255" key="1">
    <source>
        <dbReference type="HAMAP-Rule" id="MF_00120"/>
    </source>
</evidence>